<accession>Q72YB2</accession>
<organism>
    <name type="scientific">Bacillus cereus (strain ATCC 10987 / NRS 248)</name>
    <dbReference type="NCBI Taxonomy" id="222523"/>
    <lineage>
        <taxon>Bacteria</taxon>
        <taxon>Bacillati</taxon>
        <taxon>Bacillota</taxon>
        <taxon>Bacilli</taxon>
        <taxon>Bacillales</taxon>
        <taxon>Bacillaceae</taxon>
        <taxon>Bacillus</taxon>
        <taxon>Bacillus cereus group</taxon>
    </lineage>
</organism>
<evidence type="ECO:0000255" key="1">
    <source>
        <dbReference type="HAMAP-Rule" id="MF_00206"/>
    </source>
</evidence>
<evidence type="ECO:0000255" key="2">
    <source>
        <dbReference type="PROSITE-ProRule" id="PRU01266"/>
    </source>
</evidence>
<dbReference type="EC" id="2.8.1.8" evidence="1"/>
<dbReference type="EMBL" id="AE017194">
    <property type="protein sequence ID" value="AAS44010.1"/>
    <property type="molecule type" value="Genomic_DNA"/>
</dbReference>
<dbReference type="SMR" id="Q72YB2"/>
<dbReference type="KEGG" id="bca:BCE_5109"/>
<dbReference type="HOGENOM" id="CLU_033144_2_1_9"/>
<dbReference type="Proteomes" id="UP000002527">
    <property type="component" value="Chromosome"/>
</dbReference>
<dbReference type="GO" id="GO:0005737">
    <property type="term" value="C:cytoplasm"/>
    <property type="evidence" value="ECO:0007669"/>
    <property type="project" value="UniProtKB-SubCell"/>
</dbReference>
<dbReference type="GO" id="GO:0051539">
    <property type="term" value="F:4 iron, 4 sulfur cluster binding"/>
    <property type="evidence" value="ECO:0007669"/>
    <property type="project" value="UniProtKB-UniRule"/>
</dbReference>
<dbReference type="GO" id="GO:0016992">
    <property type="term" value="F:lipoate synthase activity"/>
    <property type="evidence" value="ECO:0007669"/>
    <property type="project" value="UniProtKB-UniRule"/>
</dbReference>
<dbReference type="GO" id="GO:0046872">
    <property type="term" value="F:metal ion binding"/>
    <property type="evidence" value="ECO:0007669"/>
    <property type="project" value="UniProtKB-KW"/>
</dbReference>
<dbReference type="CDD" id="cd01335">
    <property type="entry name" value="Radical_SAM"/>
    <property type="match status" value="1"/>
</dbReference>
<dbReference type="FunFam" id="3.20.20.70:FF:000040">
    <property type="entry name" value="Lipoyl synthase"/>
    <property type="match status" value="1"/>
</dbReference>
<dbReference type="Gene3D" id="3.20.20.70">
    <property type="entry name" value="Aldolase class I"/>
    <property type="match status" value="1"/>
</dbReference>
<dbReference type="HAMAP" id="MF_00206">
    <property type="entry name" value="Lipoyl_synth"/>
    <property type="match status" value="1"/>
</dbReference>
<dbReference type="InterPro" id="IPR013785">
    <property type="entry name" value="Aldolase_TIM"/>
</dbReference>
<dbReference type="InterPro" id="IPR006638">
    <property type="entry name" value="Elp3/MiaA/NifB-like_rSAM"/>
</dbReference>
<dbReference type="InterPro" id="IPR031691">
    <property type="entry name" value="LIAS_N"/>
</dbReference>
<dbReference type="InterPro" id="IPR003698">
    <property type="entry name" value="Lipoyl_synth"/>
</dbReference>
<dbReference type="InterPro" id="IPR007197">
    <property type="entry name" value="rSAM"/>
</dbReference>
<dbReference type="NCBIfam" id="TIGR00510">
    <property type="entry name" value="lipA"/>
    <property type="match status" value="1"/>
</dbReference>
<dbReference type="NCBIfam" id="NF004019">
    <property type="entry name" value="PRK05481.1"/>
    <property type="match status" value="1"/>
</dbReference>
<dbReference type="NCBIfam" id="NF009544">
    <property type="entry name" value="PRK12928.1"/>
    <property type="match status" value="1"/>
</dbReference>
<dbReference type="PANTHER" id="PTHR10949">
    <property type="entry name" value="LIPOYL SYNTHASE"/>
    <property type="match status" value="1"/>
</dbReference>
<dbReference type="PANTHER" id="PTHR10949:SF0">
    <property type="entry name" value="LIPOYL SYNTHASE, MITOCHONDRIAL"/>
    <property type="match status" value="1"/>
</dbReference>
<dbReference type="Pfam" id="PF16881">
    <property type="entry name" value="LIAS_N"/>
    <property type="match status" value="1"/>
</dbReference>
<dbReference type="Pfam" id="PF04055">
    <property type="entry name" value="Radical_SAM"/>
    <property type="match status" value="1"/>
</dbReference>
<dbReference type="PIRSF" id="PIRSF005963">
    <property type="entry name" value="Lipoyl_synth"/>
    <property type="match status" value="1"/>
</dbReference>
<dbReference type="SFLD" id="SFLDF00271">
    <property type="entry name" value="lipoyl_synthase"/>
    <property type="match status" value="1"/>
</dbReference>
<dbReference type="SFLD" id="SFLDS00029">
    <property type="entry name" value="Radical_SAM"/>
    <property type="match status" value="1"/>
</dbReference>
<dbReference type="SMART" id="SM00729">
    <property type="entry name" value="Elp3"/>
    <property type="match status" value="1"/>
</dbReference>
<dbReference type="SUPFAM" id="SSF102114">
    <property type="entry name" value="Radical SAM enzymes"/>
    <property type="match status" value="1"/>
</dbReference>
<dbReference type="PROSITE" id="PS51918">
    <property type="entry name" value="RADICAL_SAM"/>
    <property type="match status" value="1"/>
</dbReference>
<sequence>MTKQTEYKRKPEWLKIKLNTNENYTGLKKMMRSKNLHTVCEEAKCPNIHECWAVRKTATFMILGAVCTRACRFCAVKTGLPTELDLQEPERVADSVVQMGLKHVVITAVARDDLKDGGAAVFAETVRAVRRKNPFTSIEVLPSDMGGVEENLKMLMDAKPDILNHNIETVRRLSDRVRARAKYDRSLEFLRRAKEMQPDIPTKSSIMVGLGETREDLIEAMDDLRANNVDILTLGQYLQPSKKHLPVLKYYPPAEFAELKEIALSKGFSHCEAGPLVRSSYHADEQVRSAKENTAEAK</sequence>
<keyword id="KW-0004">4Fe-4S</keyword>
<keyword id="KW-0963">Cytoplasm</keyword>
<keyword id="KW-0408">Iron</keyword>
<keyword id="KW-0411">Iron-sulfur</keyword>
<keyword id="KW-0479">Metal-binding</keyword>
<keyword id="KW-0949">S-adenosyl-L-methionine</keyword>
<keyword id="KW-0808">Transferase</keyword>
<comment type="function">
    <text evidence="1">Catalyzes the radical-mediated insertion of two sulfur atoms into the C-6 and C-8 positions of the octanoyl moiety bound to the lipoyl domains of lipoate-dependent enzymes, thereby converting the octanoylated domains into lipoylated derivatives.</text>
</comment>
<comment type="catalytic activity">
    <reaction evidence="1">
        <text>[[Fe-S] cluster scaffold protein carrying a second [4Fe-4S](2+) cluster] + N(6)-octanoyl-L-lysyl-[protein] + 2 oxidized [2Fe-2S]-[ferredoxin] + 2 S-adenosyl-L-methionine + 4 H(+) = [[Fe-S] cluster scaffold protein] + N(6)-[(R)-dihydrolipoyl]-L-lysyl-[protein] + 4 Fe(3+) + 2 hydrogen sulfide + 2 5'-deoxyadenosine + 2 L-methionine + 2 reduced [2Fe-2S]-[ferredoxin]</text>
        <dbReference type="Rhea" id="RHEA:16585"/>
        <dbReference type="Rhea" id="RHEA-COMP:9928"/>
        <dbReference type="Rhea" id="RHEA-COMP:10000"/>
        <dbReference type="Rhea" id="RHEA-COMP:10001"/>
        <dbReference type="Rhea" id="RHEA-COMP:10475"/>
        <dbReference type="Rhea" id="RHEA-COMP:14568"/>
        <dbReference type="Rhea" id="RHEA-COMP:14569"/>
        <dbReference type="ChEBI" id="CHEBI:15378"/>
        <dbReference type="ChEBI" id="CHEBI:17319"/>
        <dbReference type="ChEBI" id="CHEBI:29034"/>
        <dbReference type="ChEBI" id="CHEBI:29919"/>
        <dbReference type="ChEBI" id="CHEBI:33722"/>
        <dbReference type="ChEBI" id="CHEBI:33737"/>
        <dbReference type="ChEBI" id="CHEBI:33738"/>
        <dbReference type="ChEBI" id="CHEBI:57844"/>
        <dbReference type="ChEBI" id="CHEBI:59789"/>
        <dbReference type="ChEBI" id="CHEBI:78809"/>
        <dbReference type="ChEBI" id="CHEBI:83100"/>
        <dbReference type="EC" id="2.8.1.8"/>
    </reaction>
</comment>
<comment type="cofactor">
    <cofactor evidence="1">
        <name>[4Fe-4S] cluster</name>
        <dbReference type="ChEBI" id="CHEBI:49883"/>
    </cofactor>
    <text evidence="1">Binds 2 [4Fe-4S] clusters per subunit. One cluster is coordinated with 3 cysteines and an exchangeable S-adenosyl-L-methionine.</text>
</comment>
<comment type="pathway">
    <text evidence="1">Protein modification; protein lipoylation via endogenous pathway; protein N(6)-(lipoyl)lysine from octanoyl-[acyl-carrier-protein].</text>
</comment>
<comment type="subcellular location">
    <subcellularLocation>
        <location evidence="1">Cytoplasm</location>
    </subcellularLocation>
</comment>
<comment type="similarity">
    <text evidence="1">Belongs to the radical SAM superfamily. Lipoyl synthase family.</text>
</comment>
<protein>
    <recommendedName>
        <fullName evidence="1">Lipoyl synthase</fullName>
        <ecNumber evidence="1">2.8.1.8</ecNumber>
    </recommendedName>
    <alternativeName>
        <fullName evidence="1">Lip-syn</fullName>
        <shortName evidence="1">LS</shortName>
    </alternativeName>
    <alternativeName>
        <fullName evidence="1">Lipoate synthase</fullName>
    </alternativeName>
    <alternativeName>
        <fullName evidence="1">Lipoic acid synthase</fullName>
    </alternativeName>
    <alternativeName>
        <fullName evidence="1">Sulfur insertion protein LipA</fullName>
    </alternativeName>
</protein>
<feature type="chain" id="PRO_1000012185" description="Lipoyl synthase">
    <location>
        <begin position="1"/>
        <end position="298"/>
    </location>
</feature>
<feature type="domain" description="Radical SAM core" evidence="2">
    <location>
        <begin position="53"/>
        <end position="269"/>
    </location>
</feature>
<feature type="binding site" evidence="1">
    <location>
        <position position="40"/>
    </location>
    <ligand>
        <name>[4Fe-4S] cluster</name>
        <dbReference type="ChEBI" id="CHEBI:49883"/>
        <label>1</label>
    </ligand>
</feature>
<feature type="binding site" evidence="1">
    <location>
        <position position="45"/>
    </location>
    <ligand>
        <name>[4Fe-4S] cluster</name>
        <dbReference type="ChEBI" id="CHEBI:49883"/>
        <label>1</label>
    </ligand>
</feature>
<feature type="binding site" evidence="1">
    <location>
        <position position="51"/>
    </location>
    <ligand>
        <name>[4Fe-4S] cluster</name>
        <dbReference type="ChEBI" id="CHEBI:49883"/>
        <label>1</label>
    </ligand>
</feature>
<feature type="binding site" evidence="1">
    <location>
        <position position="67"/>
    </location>
    <ligand>
        <name>[4Fe-4S] cluster</name>
        <dbReference type="ChEBI" id="CHEBI:49883"/>
        <label>2</label>
        <note>4Fe-4S-S-AdoMet</note>
    </ligand>
</feature>
<feature type="binding site" evidence="1">
    <location>
        <position position="71"/>
    </location>
    <ligand>
        <name>[4Fe-4S] cluster</name>
        <dbReference type="ChEBI" id="CHEBI:49883"/>
        <label>2</label>
        <note>4Fe-4S-S-AdoMet</note>
    </ligand>
</feature>
<feature type="binding site" evidence="1">
    <location>
        <position position="74"/>
    </location>
    <ligand>
        <name>[4Fe-4S] cluster</name>
        <dbReference type="ChEBI" id="CHEBI:49883"/>
        <label>2</label>
        <note>4Fe-4S-S-AdoMet</note>
    </ligand>
</feature>
<feature type="binding site" evidence="1">
    <location>
        <position position="280"/>
    </location>
    <ligand>
        <name>[4Fe-4S] cluster</name>
        <dbReference type="ChEBI" id="CHEBI:49883"/>
        <label>1</label>
    </ligand>
</feature>
<proteinExistence type="inferred from homology"/>
<gene>
    <name evidence="1" type="primary">lipA</name>
    <name type="ordered locus">BCE_5109</name>
</gene>
<name>LIPA_BACC1</name>
<reference key="1">
    <citation type="journal article" date="2004" name="Nucleic Acids Res.">
        <title>The genome sequence of Bacillus cereus ATCC 10987 reveals metabolic adaptations and a large plasmid related to Bacillus anthracis pXO1.</title>
        <authorList>
            <person name="Rasko D.A."/>
            <person name="Ravel J."/>
            <person name="Oekstad O.A."/>
            <person name="Helgason E."/>
            <person name="Cer R.Z."/>
            <person name="Jiang L."/>
            <person name="Shores K.A."/>
            <person name="Fouts D.E."/>
            <person name="Tourasse N.J."/>
            <person name="Angiuoli S.V."/>
            <person name="Kolonay J.F."/>
            <person name="Nelson W.C."/>
            <person name="Kolstoe A.-B."/>
            <person name="Fraser C.M."/>
            <person name="Read T.D."/>
        </authorList>
    </citation>
    <scope>NUCLEOTIDE SEQUENCE [LARGE SCALE GENOMIC DNA]</scope>
    <source>
        <strain>ATCC 10987 / NRS 248</strain>
    </source>
</reference>